<comment type="function">
    <text evidence="2 4">Part of the gene cluster that mediates the biosynthesis of the selective antifungal agent ascochitine, an o-quinone methide that plays a possible protective role against other microbial competitors in nature and is considered to be important for pathogenicity of legume-associated Didymella species (PubMed:31554725). The pathway probably begins with the synthesis of a keto-aldehyde intermediate by the ascochitine non-reducing polyketide synthase pksAC from successive condensations of 4 malonyl-CoA units, presumably with a simple acetyl-CoA starter unit (Probable). Release of the keto-aldehyde intermediate is consistent with the presence of the C-terminal reductive release domain (Probable). The HR-PKS (orf7) probably makes a diketide starter unit which is passed to the non-reducing polyketide synthase pksAC for further extension, producing ascochital and ascochitine (Probable). The aldehyde dehydrogenase (orf1), the 2-oxoglutarate-dependent dioxygenase (orf3) and the dehydrogenase (orf9) are probably involved in subsequent oxidations of methyl groups to the carboxylic acid of the heterocyclic ring (Probable). The ascochitine gene cluster also includes a gene encoding a short peptide with a cupin domain (orf2) that is often found in secondary metabolite gene clusters and which function has still to be determined (Probable).</text>
</comment>
<comment type="pathway">
    <text evidence="4">Mycotoxin biosynthesis.</text>
</comment>
<comment type="subcellular location">
    <subcellularLocation>
        <location evidence="1">Membrane</location>
        <topology evidence="1">Multi-pass membrane protein</topology>
    </subcellularLocation>
</comment>
<reference key="1">
    <citation type="journal article" date="2019" name="MSphere">
        <title>Identification of a polyketide synthase gene responsible for ascochitine biosynthesis in Ascochyta fabae and its abrogation in sister taxa.</title>
        <authorList>
            <person name="Kim W."/>
            <person name="Lichtenzveig J."/>
            <person name="Syme R.A."/>
            <person name="Williams A.H."/>
            <person name="Peever T.L."/>
            <person name="Chen W."/>
        </authorList>
    </citation>
    <scope>NUCLEOTIDE SEQUENCE [GENOMIC DNA]</scope>
    <scope>FUNCTION</scope>
    <source>
        <strain>AF247/15</strain>
    </source>
</reference>
<protein>
    <recommendedName>
        <fullName evidence="3">Ascochitine biosynthesis cluster protein 8</fullName>
    </recommendedName>
    <alternativeName>
        <fullName evidence="3">SAT domain-containing protein</fullName>
    </alternativeName>
</protein>
<accession>A0A5C1RGL7</accession>
<sequence length="379" mass="40977">MVLQKLGDAQRILVFGDSTIENKLPVIRALWEASESHPLLKAFLQQAVEIIQEETQKLASHEGSLFLHCIDVLEVAEVYAEADEPDELIASVLALVARFGALVLDLERDDSNKRSVGPVSILGFCTGLLAGAVAACAEDMIKVFDLACEVLAISFRLVVALVRRSKAIEPNAGLWATTFIRISKEELEMQLDDYNLHHGLSQDKKAYIGVSSQSWNSVFAPPSVILHIARQCPILSQISQVPTTAAMAVHASHLSRPDVNWILGSLPGLETPVLPDRLIVSTSTGKPFLAKTLRELIQSIIADISMNILDIDGTIHGICSGLDMTKPVVISAMGPSPNIPALTRRLASGGVQLKTFAVIAGDRPRRVVPRRPSSSGYSS</sequence>
<proteinExistence type="inferred from homology"/>
<dbReference type="EMBL" id="MN052629">
    <property type="protein sequence ID" value="QEN17976.1"/>
    <property type="molecule type" value="Genomic_DNA"/>
</dbReference>
<dbReference type="SMR" id="A0A5C1RGL7"/>
<dbReference type="GO" id="GO:0016020">
    <property type="term" value="C:membrane"/>
    <property type="evidence" value="ECO:0007669"/>
    <property type="project" value="UniProtKB-SubCell"/>
</dbReference>
<dbReference type="GO" id="GO:0016740">
    <property type="term" value="F:transferase activity"/>
    <property type="evidence" value="ECO:0007669"/>
    <property type="project" value="InterPro"/>
</dbReference>
<dbReference type="Gene3D" id="3.40.366.10">
    <property type="entry name" value="Malonyl-Coenzyme A Acyl Carrier Protein, domain 2"/>
    <property type="match status" value="1"/>
</dbReference>
<dbReference type="InterPro" id="IPR001227">
    <property type="entry name" value="Ac_transferase_dom_sf"/>
</dbReference>
<dbReference type="InterPro" id="IPR032088">
    <property type="entry name" value="SAT"/>
</dbReference>
<dbReference type="Pfam" id="PF16073">
    <property type="entry name" value="SAT"/>
    <property type="match status" value="1"/>
</dbReference>
<feature type="chain" id="PRO_0000448984" description="Ascochitine biosynthesis cluster protein 8">
    <location>
        <begin position="1"/>
        <end position="379"/>
    </location>
</feature>
<feature type="transmembrane region" description="Helical" evidence="1">
    <location>
        <begin position="87"/>
        <end position="107"/>
    </location>
</feature>
<feature type="transmembrane region" description="Helical" evidence="1">
    <location>
        <begin position="116"/>
        <end position="136"/>
    </location>
</feature>
<feature type="transmembrane region" description="Helical" evidence="1">
    <location>
        <begin position="141"/>
        <end position="161"/>
    </location>
</feature>
<evidence type="ECO:0000255" key="1"/>
<evidence type="ECO:0000269" key="2">
    <source>
    </source>
</evidence>
<evidence type="ECO:0000303" key="3">
    <source>
    </source>
</evidence>
<evidence type="ECO:0000305" key="4">
    <source>
    </source>
</evidence>
<organism>
    <name type="scientific">Didymella fabae</name>
    <name type="common">Leaf and pod spot disease fungus</name>
    <name type="synonym">Ascochyta fabae</name>
    <dbReference type="NCBI Taxonomy" id="372025"/>
    <lineage>
        <taxon>Eukaryota</taxon>
        <taxon>Fungi</taxon>
        <taxon>Dikarya</taxon>
        <taxon>Ascomycota</taxon>
        <taxon>Pezizomycotina</taxon>
        <taxon>Dothideomycetes</taxon>
        <taxon>Pleosporomycetidae</taxon>
        <taxon>Pleosporales</taxon>
        <taxon>Pleosporineae</taxon>
        <taxon>Didymellaceae</taxon>
        <taxon>Ascochyta</taxon>
    </lineage>
</organism>
<name>ASC8_DIDFA</name>
<gene>
    <name evidence="3" type="ORF">orf</name>
</gene>
<keyword id="KW-0472">Membrane</keyword>
<keyword id="KW-0812">Transmembrane</keyword>
<keyword id="KW-1133">Transmembrane helix</keyword>
<keyword id="KW-0843">Virulence</keyword>